<name>IF3_HAEIN</name>
<dbReference type="EMBL" id="L42023">
    <property type="protein sequence ID" value="AAC22963.1"/>
    <property type="status" value="ALT_INIT"/>
    <property type="molecule type" value="Genomic_DNA"/>
</dbReference>
<dbReference type="PIR" id="B64116">
    <property type="entry name" value="B64116"/>
</dbReference>
<dbReference type="RefSeq" id="NP_439469.1">
    <property type="nucleotide sequence ID" value="NC_000907.1"/>
</dbReference>
<dbReference type="SMR" id="P43814"/>
<dbReference type="STRING" id="71421.HI_1318"/>
<dbReference type="EnsemblBacteria" id="AAC22963">
    <property type="protein sequence ID" value="AAC22963"/>
    <property type="gene ID" value="HI_1318"/>
</dbReference>
<dbReference type="KEGG" id="hin:HI_1318"/>
<dbReference type="PATRIC" id="fig|71421.8.peg.1370"/>
<dbReference type="eggNOG" id="COG0290">
    <property type="taxonomic scope" value="Bacteria"/>
</dbReference>
<dbReference type="HOGENOM" id="CLU_054919_3_2_6"/>
<dbReference type="OrthoDB" id="9806014at2"/>
<dbReference type="PhylomeDB" id="P43814"/>
<dbReference type="Proteomes" id="UP000000579">
    <property type="component" value="Chromosome"/>
</dbReference>
<dbReference type="GO" id="GO:0005829">
    <property type="term" value="C:cytosol"/>
    <property type="evidence" value="ECO:0000318"/>
    <property type="project" value="GO_Central"/>
</dbReference>
<dbReference type="GO" id="GO:0043022">
    <property type="term" value="F:ribosome binding"/>
    <property type="evidence" value="ECO:0000318"/>
    <property type="project" value="GO_Central"/>
</dbReference>
<dbReference type="GO" id="GO:0003743">
    <property type="term" value="F:translation initiation factor activity"/>
    <property type="evidence" value="ECO:0000318"/>
    <property type="project" value="GO_Central"/>
</dbReference>
<dbReference type="GO" id="GO:0032790">
    <property type="term" value="P:ribosome disassembly"/>
    <property type="evidence" value="ECO:0000318"/>
    <property type="project" value="GO_Central"/>
</dbReference>
<dbReference type="FunFam" id="3.10.20.80:FF:000001">
    <property type="entry name" value="Translation initiation factor IF-3"/>
    <property type="match status" value="1"/>
</dbReference>
<dbReference type="FunFam" id="3.30.110.10:FF:000001">
    <property type="entry name" value="Translation initiation factor IF-3"/>
    <property type="match status" value="1"/>
</dbReference>
<dbReference type="Gene3D" id="3.30.110.10">
    <property type="entry name" value="Translation initiation factor 3 (IF-3), C-terminal domain"/>
    <property type="match status" value="1"/>
</dbReference>
<dbReference type="Gene3D" id="3.10.20.80">
    <property type="entry name" value="Translation initiation factor 3 (IF-3), N-terminal domain"/>
    <property type="match status" value="1"/>
</dbReference>
<dbReference type="HAMAP" id="MF_00080">
    <property type="entry name" value="IF_3"/>
    <property type="match status" value="1"/>
</dbReference>
<dbReference type="InterPro" id="IPR036788">
    <property type="entry name" value="T_IF-3_C_sf"/>
</dbReference>
<dbReference type="InterPro" id="IPR036787">
    <property type="entry name" value="T_IF-3_N_sf"/>
</dbReference>
<dbReference type="InterPro" id="IPR019813">
    <property type="entry name" value="Translation_initiation_fac3_CS"/>
</dbReference>
<dbReference type="InterPro" id="IPR001288">
    <property type="entry name" value="Translation_initiation_fac_3"/>
</dbReference>
<dbReference type="InterPro" id="IPR019815">
    <property type="entry name" value="Translation_initiation_fac_3_C"/>
</dbReference>
<dbReference type="InterPro" id="IPR019814">
    <property type="entry name" value="Translation_initiation_fac_3_N"/>
</dbReference>
<dbReference type="NCBIfam" id="TIGR00168">
    <property type="entry name" value="infC"/>
    <property type="match status" value="1"/>
</dbReference>
<dbReference type="PANTHER" id="PTHR10938">
    <property type="entry name" value="TRANSLATION INITIATION FACTOR IF-3"/>
    <property type="match status" value="1"/>
</dbReference>
<dbReference type="PANTHER" id="PTHR10938:SF0">
    <property type="entry name" value="TRANSLATION INITIATION FACTOR IF-3, MITOCHONDRIAL"/>
    <property type="match status" value="1"/>
</dbReference>
<dbReference type="Pfam" id="PF00707">
    <property type="entry name" value="IF3_C"/>
    <property type="match status" value="1"/>
</dbReference>
<dbReference type="Pfam" id="PF05198">
    <property type="entry name" value="IF3_N"/>
    <property type="match status" value="1"/>
</dbReference>
<dbReference type="SUPFAM" id="SSF55200">
    <property type="entry name" value="Translation initiation factor IF3, C-terminal domain"/>
    <property type="match status" value="1"/>
</dbReference>
<dbReference type="SUPFAM" id="SSF54364">
    <property type="entry name" value="Translation initiation factor IF3, N-terminal domain"/>
    <property type="match status" value="1"/>
</dbReference>
<dbReference type="PROSITE" id="PS00938">
    <property type="entry name" value="IF3"/>
    <property type="match status" value="1"/>
</dbReference>
<sequence>MNRPNRINEEIRVKEVRLIDQNGEQAGIVSIQQALEMMAEQAELDLVEISPNAEPPVCRIMNYGKFLYEKSKTAKEQKKKQKVVQVKEIKFRPGTDEGDYQVKLRSLIRFLEDGDKAKITVRFRGREMAHQDIGLDVLERVKNDLAEISVVESAPGKLEGRQAVMVLAPKKK</sequence>
<accession>P43814</accession>
<proteinExistence type="inferred from homology"/>
<organism>
    <name type="scientific">Haemophilus influenzae (strain ATCC 51907 / DSM 11121 / KW20 / Rd)</name>
    <dbReference type="NCBI Taxonomy" id="71421"/>
    <lineage>
        <taxon>Bacteria</taxon>
        <taxon>Pseudomonadati</taxon>
        <taxon>Pseudomonadota</taxon>
        <taxon>Gammaproteobacteria</taxon>
        <taxon>Pasteurellales</taxon>
        <taxon>Pasteurellaceae</taxon>
        <taxon>Haemophilus</taxon>
    </lineage>
</organism>
<evidence type="ECO:0000250" key="1"/>
<evidence type="ECO:0000255" key="2">
    <source>
        <dbReference type="HAMAP-Rule" id="MF_00080"/>
    </source>
</evidence>
<evidence type="ECO:0000305" key="3"/>
<protein>
    <recommendedName>
        <fullName evidence="2">Translation initiation factor IF-3</fullName>
    </recommendedName>
</protein>
<keyword id="KW-0963">Cytoplasm</keyword>
<keyword id="KW-0396">Initiation factor</keyword>
<keyword id="KW-0648">Protein biosynthesis</keyword>
<keyword id="KW-1185">Reference proteome</keyword>
<feature type="chain" id="PRO_0000177523" description="Translation initiation factor IF-3">
    <location>
        <begin position="1"/>
        <end position="172"/>
    </location>
</feature>
<feature type="site" description="Important for 30S binding" evidence="1">
    <location>
        <position position="100"/>
    </location>
</feature>
<feature type="site" description="Important for 30S binding" evidence="1">
    <location>
        <position position="103"/>
    </location>
</feature>
<reference key="1">
    <citation type="journal article" date="1995" name="Science">
        <title>Whole-genome random sequencing and assembly of Haemophilus influenzae Rd.</title>
        <authorList>
            <person name="Fleischmann R.D."/>
            <person name="Adams M.D."/>
            <person name="White O."/>
            <person name="Clayton R.A."/>
            <person name="Kirkness E.F."/>
            <person name="Kerlavage A.R."/>
            <person name="Bult C.J."/>
            <person name="Tomb J.-F."/>
            <person name="Dougherty B.A."/>
            <person name="Merrick J.M."/>
            <person name="McKenney K."/>
            <person name="Sutton G.G."/>
            <person name="FitzHugh W."/>
            <person name="Fields C.A."/>
            <person name="Gocayne J.D."/>
            <person name="Scott J.D."/>
            <person name="Shirley R."/>
            <person name="Liu L.-I."/>
            <person name="Glodek A."/>
            <person name="Kelley J.M."/>
            <person name="Weidman J.F."/>
            <person name="Phillips C.A."/>
            <person name="Spriggs T."/>
            <person name="Hedblom E."/>
            <person name="Cotton M.D."/>
            <person name="Utterback T.R."/>
            <person name="Hanna M.C."/>
            <person name="Nguyen D.T."/>
            <person name="Saudek D.M."/>
            <person name="Brandon R.C."/>
            <person name="Fine L.D."/>
            <person name="Fritchman J.L."/>
            <person name="Fuhrmann J.L."/>
            <person name="Geoghagen N.S.M."/>
            <person name="Gnehm C.L."/>
            <person name="McDonald L.A."/>
            <person name="Small K.V."/>
            <person name="Fraser C.M."/>
            <person name="Smith H.O."/>
            <person name="Venter J.C."/>
        </authorList>
    </citation>
    <scope>NUCLEOTIDE SEQUENCE [LARGE SCALE GENOMIC DNA]</scope>
    <source>
        <strain>ATCC 51907 / DSM 11121 / KW20 / Rd</strain>
    </source>
</reference>
<comment type="function">
    <text evidence="2">IF-3 binds to the 30S ribosomal subunit and shifts the equilibrium between 70S ribosomes and their 50S and 30S subunits in favor of the free subunits, thus enhancing the availability of 30S subunits on which protein synthesis initiation begins.</text>
</comment>
<comment type="subunit">
    <text evidence="2">Monomer.</text>
</comment>
<comment type="subcellular location">
    <subcellularLocation>
        <location evidence="2">Cytoplasm</location>
    </subcellularLocation>
</comment>
<comment type="similarity">
    <text evidence="2">Belongs to the IF-3 family.</text>
</comment>
<comment type="sequence caution" evidence="3">
    <conflict type="erroneous initiation">
        <sequence resource="EMBL-CDS" id="AAC22963"/>
    </conflict>
</comment>
<gene>
    <name evidence="2" type="primary">infC</name>
    <name type="ordered locus">HI_1318</name>
</gene>